<accession>Q3Z5P0</accession>
<reference key="1">
    <citation type="journal article" date="2005" name="Nucleic Acids Res.">
        <title>Genome dynamics and diversity of Shigella species, the etiologic agents of bacillary dysentery.</title>
        <authorList>
            <person name="Yang F."/>
            <person name="Yang J."/>
            <person name="Zhang X."/>
            <person name="Chen L."/>
            <person name="Jiang Y."/>
            <person name="Yan Y."/>
            <person name="Tang X."/>
            <person name="Wang J."/>
            <person name="Xiong Z."/>
            <person name="Dong J."/>
            <person name="Xue Y."/>
            <person name="Zhu Y."/>
            <person name="Xu X."/>
            <person name="Sun L."/>
            <person name="Chen S."/>
            <person name="Nie H."/>
            <person name="Peng J."/>
            <person name="Xu J."/>
            <person name="Wang Y."/>
            <person name="Yuan Z."/>
            <person name="Wen Y."/>
            <person name="Yao Z."/>
            <person name="Shen Y."/>
            <person name="Qiang B."/>
            <person name="Hou Y."/>
            <person name="Yu J."/>
            <person name="Jin Q."/>
        </authorList>
    </citation>
    <scope>NUCLEOTIDE SEQUENCE [LARGE SCALE GENOMIC DNA]</scope>
    <source>
        <strain>Ss046</strain>
    </source>
</reference>
<keyword id="KW-0068">Autocatalytic cleavage</keyword>
<keyword id="KW-0210">Decarboxylase</keyword>
<keyword id="KW-0456">Lyase</keyword>
<keyword id="KW-0620">Polyamine biosynthesis</keyword>
<keyword id="KW-0670">Pyruvate</keyword>
<keyword id="KW-1185">Reference proteome</keyword>
<keyword id="KW-0949">S-adenosyl-L-methionine</keyword>
<keyword id="KW-0704">Schiff base</keyword>
<keyword id="KW-0745">Spermidine biosynthesis</keyword>
<keyword id="KW-0865">Zymogen</keyword>
<sequence>MKKLKLHGFNNLTKSLSFCIYDICYAKTAEERDGYIAYIDELYNANRLTEILSETCSIIGANILNIARQDYEPQGASVTILVSEEPVDPKLIDKTEHPGPLPETVVAHLDKSHICVHTYPESHPEGGLCTFRADIEVSTCGVISPLKALNYLIHQLESDIVTIDYRVRGFTRDINGMKHFIDHEINSIQNFMSDDMKALYDMVDVNVYQENIFHTKMLLKEFDLKHYMFHTKPEDLTDSERQEITAALWKEMREIYYGRNMPAV</sequence>
<evidence type="ECO:0000255" key="1">
    <source>
        <dbReference type="HAMAP-Rule" id="MF_00465"/>
    </source>
</evidence>
<protein>
    <recommendedName>
        <fullName evidence="1">S-adenosylmethionine decarboxylase proenzyme</fullName>
        <shortName evidence="1">AdoMetDC</shortName>
        <shortName evidence="1">SAMDC</shortName>
        <ecNumber evidence="1">4.1.1.50</ecNumber>
    </recommendedName>
    <component>
        <recommendedName>
            <fullName evidence="1">S-adenosylmethionine decarboxylase beta chain</fullName>
        </recommendedName>
    </component>
    <component>
        <recommendedName>
            <fullName evidence="1">S-adenosylmethionine decarboxylase alpha chain</fullName>
        </recommendedName>
    </component>
</protein>
<comment type="function">
    <text evidence="1">Catalyzes the decarboxylation of S-adenosylmethionine to S-adenosylmethioninamine (dcAdoMet), the propylamine donor required for the synthesis of the polyamines spermine and spermidine from the diamine putrescine.</text>
</comment>
<comment type="catalytic activity">
    <reaction evidence="1">
        <text>S-adenosyl-L-methionine + H(+) = S-adenosyl 3-(methylsulfanyl)propylamine + CO2</text>
        <dbReference type="Rhea" id="RHEA:15981"/>
        <dbReference type="ChEBI" id="CHEBI:15378"/>
        <dbReference type="ChEBI" id="CHEBI:16526"/>
        <dbReference type="ChEBI" id="CHEBI:57443"/>
        <dbReference type="ChEBI" id="CHEBI:59789"/>
        <dbReference type="EC" id="4.1.1.50"/>
    </reaction>
</comment>
<comment type="cofactor">
    <cofactor evidence="1">
        <name>pyruvate</name>
        <dbReference type="ChEBI" id="CHEBI:15361"/>
    </cofactor>
    <text evidence="1">Binds 1 pyruvoyl group covalently per subunit.</text>
</comment>
<comment type="pathway">
    <text evidence="1">Amine and polyamine biosynthesis; S-adenosylmethioninamine biosynthesis; S-adenosylmethioninamine from S-adenosyl-L-methionine: step 1/1.</text>
</comment>
<comment type="subunit">
    <text evidence="1">Heterooctamer of four alpha and four beta chains arranged as a tetramer of alpha/beta heterodimers.</text>
</comment>
<comment type="PTM">
    <text evidence="1">Is synthesized initially as an inactive proenzyme. Formation of the active enzyme involves a self-maturation process in which the active site pyruvoyl group is generated from an internal serine residue via an autocatalytic post-translational modification. Two non-identical subunits are generated from the proenzyme in this reaction, and the pyruvate is formed at the N-terminus of the alpha chain, which is derived from the carboxyl end of the proenzyme. The post-translation cleavage follows an unusual pathway, termed non-hydrolytic serinolysis, in which the side chain hydroxyl group of the serine supplies its oxygen atom to form the C-terminus of the beta chain, while the remainder of the serine residue undergoes an oxidative deamination to produce ammonia and the pyruvoyl group blocking the N-terminus of the alpha chain.</text>
</comment>
<comment type="similarity">
    <text evidence="1">Belongs to the prokaryotic AdoMetDC family. Type 2 subfamily.</text>
</comment>
<dbReference type="EC" id="4.1.1.50" evidence="1"/>
<dbReference type="EMBL" id="CP000038">
    <property type="protein sequence ID" value="AAZ86922.1"/>
    <property type="molecule type" value="Genomic_DNA"/>
</dbReference>
<dbReference type="RefSeq" id="WP_000734287.1">
    <property type="nucleotide sequence ID" value="NC_007384.1"/>
</dbReference>
<dbReference type="GeneID" id="93777316"/>
<dbReference type="KEGG" id="ssn:SSON_0128"/>
<dbReference type="HOGENOM" id="CLU_092007_0_0_6"/>
<dbReference type="UniPathway" id="UPA00331">
    <property type="reaction ID" value="UER00451"/>
</dbReference>
<dbReference type="Proteomes" id="UP000002529">
    <property type="component" value="Chromosome"/>
</dbReference>
<dbReference type="GO" id="GO:0005829">
    <property type="term" value="C:cytosol"/>
    <property type="evidence" value="ECO:0007669"/>
    <property type="project" value="TreeGrafter"/>
</dbReference>
<dbReference type="GO" id="GO:0004014">
    <property type="term" value="F:adenosylmethionine decarboxylase activity"/>
    <property type="evidence" value="ECO:0007669"/>
    <property type="project" value="UniProtKB-UniRule"/>
</dbReference>
<dbReference type="GO" id="GO:0008295">
    <property type="term" value="P:spermidine biosynthetic process"/>
    <property type="evidence" value="ECO:0007669"/>
    <property type="project" value="UniProtKB-UniRule"/>
</dbReference>
<dbReference type="FunFam" id="3.60.90.10:FF:000001">
    <property type="entry name" value="S-adenosylmethionine decarboxylase proenzyme"/>
    <property type="match status" value="1"/>
</dbReference>
<dbReference type="Gene3D" id="3.60.90.10">
    <property type="entry name" value="S-adenosylmethionine decarboxylase"/>
    <property type="match status" value="1"/>
</dbReference>
<dbReference type="HAMAP" id="MF_00465">
    <property type="entry name" value="AdoMetDC_2"/>
    <property type="match status" value="1"/>
</dbReference>
<dbReference type="InterPro" id="IPR003826">
    <property type="entry name" value="AdoMetDC_fam_prok"/>
</dbReference>
<dbReference type="InterPro" id="IPR009165">
    <property type="entry name" value="S-AdoMet_deCO2ase_bac"/>
</dbReference>
<dbReference type="InterPro" id="IPR016067">
    <property type="entry name" value="S-AdoMet_deCO2ase_core"/>
</dbReference>
<dbReference type="NCBIfam" id="TIGR03331">
    <property type="entry name" value="SAM_DCase_Eco"/>
    <property type="match status" value="1"/>
</dbReference>
<dbReference type="PANTHER" id="PTHR33866">
    <property type="entry name" value="S-ADENOSYLMETHIONINE DECARBOXYLASE PROENZYME"/>
    <property type="match status" value="1"/>
</dbReference>
<dbReference type="PANTHER" id="PTHR33866:SF1">
    <property type="entry name" value="S-ADENOSYLMETHIONINE DECARBOXYLASE PROENZYME"/>
    <property type="match status" value="1"/>
</dbReference>
<dbReference type="Pfam" id="PF02675">
    <property type="entry name" value="AdoMet_dc"/>
    <property type="match status" value="1"/>
</dbReference>
<dbReference type="PIRSF" id="PIRSF001356">
    <property type="entry name" value="SAM_decarboxylas"/>
    <property type="match status" value="1"/>
</dbReference>
<dbReference type="SUPFAM" id="SSF56276">
    <property type="entry name" value="S-adenosylmethionine decarboxylase"/>
    <property type="match status" value="1"/>
</dbReference>
<name>SPED_SHISS</name>
<organism>
    <name type="scientific">Shigella sonnei (strain Ss046)</name>
    <dbReference type="NCBI Taxonomy" id="300269"/>
    <lineage>
        <taxon>Bacteria</taxon>
        <taxon>Pseudomonadati</taxon>
        <taxon>Pseudomonadota</taxon>
        <taxon>Gammaproteobacteria</taxon>
        <taxon>Enterobacterales</taxon>
        <taxon>Enterobacteriaceae</taxon>
        <taxon>Shigella</taxon>
    </lineage>
</organism>
<proteinExistence type="inferred from homology"/>
<feature type="chain" id="PRO_0000273613" description="S-adenosylmethionine decarboxylase beta chain" evidence="1">
    <location>
        <begin position="1"/>
        <end position="111"/>
    </location>
</feature>
<feature type="chain" id="PRO_0000273614" description="S-adenosylmethionine decarboxylase alpha chain" evidence="1">
    <location>
        <begin position="112"/>
        <end position="264"/>
    </location>
</feature>
<feature type="active site" description="Schiff-base intermediate with substrate; via pyruvic acid" evidence="1">
    <location>
        <position position="112"/>
    </location>
</feature>
<feature type="active site" description="Proton acceptor; for processing activity" evidence="1">
    <location>
        <position position="117"/>
    </location>
</feature>
<feature type="active site" description="Proton donor; for catalytic activity" evidence="1">
    <location>
        <position position="140"/>
    </location>
</feature>
<feature type="site" description="Cleavage (non-hydrolytic); by autolysis" evidence="1">
    <location>
        <begin position="111"/>
        <end position="112"/>
    </location>
</feature>
<feature type="modified residue" description="Pyruvic acid (Ser); by autocatalysis" evidence="1">
    <location>
        <position position="112"/>
    </location>
</feature>
<gene>
    <name evidence="1" type="primary">speD</name>
    <name type="ordered locus">SSON_0128</name>
</gene>